<gene>
    <name type="ordered locus">Rumal_0019</name>
</gene>
<name>CEEP_RUMA7</name>
<sequence>MMISEIRQELTDHIIPFWNKLRDDENGGFYGYLSYGLELDKKADKGVILHSRILWFYSNAYMTLGGDELLDNAKHAYEFIKNNCIDYEYGGVYWMMDFEGKPADTMKHTYNIAFAIYALSSYYRASGDKEALALAYRLFEDIEKNTLDEYGYREAFDRQWRLVDNEALSENGLKADKTMNAILHLIEAYTELYKADGNEKVADRLKFQLGQMRDIVYTPDTNALKVFFDTAFNLVGDIHSYGHDIEATWLMDRACDVLGDEDLKKQFAEMDLKISHNIQDIALEDGALNNERDKNEIDKTRVWWVQAEAVVGFINAYQHSGDEKFLESAKSVWENIKEYIIDKREGGEWYSEVTFDHTPHDYKETVGPWKCPYHNGRMCMEVITRGVDI</sequence>
<keyword id="KW-0413">Isomerase</keyword>
<feature type="chain" id="PRO_0000421449" description="Cellobiose 2-epimerase">
    <location>
        <begin position="1"/>
        <end position="389"/>
    </location>
</feature>
<feature type="sequence conflict" description="In Ref. 1; BAF81109." evidence="2" ref="1">
    <original>E</original>
    <variation>G</variation>
    <location>
        <position position="38"/>
    </location>
</feature>
<feature type="sequence conflict" description="In Ref. 1; BAF81109." evidence="2" ref="1">
    <original>L</original>
    <variation>P</variation>
    <location>
        <position position="138"/>
    </location>
</feature>
<feature type="sequence conflict" description="In Ref. 1; BAF81109." evidence="2" ref="1">
    <original>D</original>
    <variation>Y</variation>
    <location>
        <position position="148"/>
    </location>
</feature>
<comment type="function">
    <text evidence="1">Catalyzes the reversible epimerization of cellobiose to 4-O-beta-D-glucopyranosyl-D-mannose (Glc-Man).</text>
</comment>
<comment type="catalytic activity">
    <reaction evidence="1">
        <text>D-cellobiose = beta-D-glucosyl-(1-&gt;4)-D-mannopyranose</text>
        <dbReference type="Rhea" id="RHEA:23384"/>
        <dbReference type="ChEBI" id="CHEBI:17057"/>
        <dbReference type="ChEBI" id="CHEBI:47931"/>
        <dbReference type="EC" id="5.1.3.11"/>
    </reaction>
</comment>
<comment type="similarity">
    <text evidence="1">Belongs to the cellobiose 2-epimerase family.</text>
</comment>
<evidence type="ECO:0000255" key="1">
    <source>
        <dbReference type="HAMAP-Rule" id="MF_00929"/>
    </source>
</evidence>
<evidence type="ECO:0000305" key="2"/>
<proteinExistence type="inferred from homology"/>
<dbReference type="EC" id="5.1.3.11" evidence="1"/>
<dbReference type="EMBL" id="AB301954">
    <property type="protein sequence ID" value="BAF81109.1"/>
    <property type="molecule type" value="Genomic_DNA"/>
</dbReference>
<dbReference type="EMBL" id="CP002403">
    <property type="protein sequence ID" value="ADU20582.1"/>
    <property type="molecule type" value="Genomic_DNA"/>
</dbReference>
<dbReference type="RefSeq" id="WP_013496783.1">
    <property type="nucleotide sequence ID" value="NC_014833.1"/>
</dbReference>
<dbReference type="SMR" id="E6UB41"/>
<dbReference type="STRING" id="697329.Rumal_0019"/>
<dbReference type="KEGG" id="ral:Rumal_0019"/>
<dbReference type="eggNOG" id="COG2942">
    <property type="taxonomic scope" value="Bacteria"/>
</dbReference>
<dbReference type="HOGENOM" id="CLU_046651_3_0_9"/>
<dbReference type="OrthoDB" id="5141876at2"/>
<dbReference type="Proteomes" id="UP000006919">
    <property type="component" value="Chromosome"/>
</dbReference>
<dbReference type="GO" id="GO:0047736">
    <property type="term" value="F:cellobiose epimerase activity"/>
    <property type="evidence" value="ECO:0007669"/>
    <property type="project" value="UniProtKB-UniRule"/>
</dbReference>
<dbReference type="GO" id="GO:0005975">
    <property type="term" value="P:carbohydrate metabolic process"/>
    <property type="evidence" value="ECO:0007669"/>
    <property type="project" value="InterPro"/>
</dbReference>
<dbReference type="Gene3D" id="1.50.10.10">
    <property type="match status" value="1"/>
</dbReference>
<dbReference type="HAMAP" id="MF_00929">
    <property type="entry name" value="Cellobiose_2_epim"/>
    <property type="match status" value="1"/>
</dbReference>
<dbReference type="InterPro" id="IPR008928">
    <property type="entry name" value="6-hairpin_glycosidase_sf"/>
</dbReference>
<dbReference type="InterPro" id="IPR012341">
    <property type="entry name" value="6hp_glycosidase-like_sf"/>
</dbReference>
<dbReference type="InterPro" id="IPR010819">
    <property type="entry name" value="AGE/CE"/>
</dbReference>
<dbReference type="InterPro" id="IPR028584">
    <property type="entry name" value="Cellobiose_2_epim"/>
</dbReference>
<dbReference type="PANTHER" id="PTHR15108">
    <property type="entry name" value="N-ACYLGLUCOSAMINE-2-EPIMERASE"/>
    <property type="match status" value="1"/>
</dbReference>
<dbReference type="Pfam" id="PF07221">
    <property type="entry name" value="GlcNAc_2-epim"/>
    <property type="match status" value="1"/>
</dbReference>
<dbReference type="SUPFAM" id="SSF48208">
    <property type="entry name" value="Six-hairpin glycosidases"/>
    <property type="match status" value="1"/>
</dbReference>
<reference key="1">
    <citation type="journal article" date="2007" name="Biochem. Biophys. Res. Commun.">
        <title>Cloning and sequencing of the cellobiose 2-epimerase gene from an obligatory anaerobe, Ruminococcus albus.</title>
        <authorList>
            <person name="Ito S."/>
            <person name="Hamada S."/>
            <person name="Yamaguchi K."/>
            <person name="Umene S."/>
            <person name="Ito H."/>
            <person name="Matsui H."/>
            <person name="Ozawa T."/>
            <person name="Taguchi H."/>
            <person name="Watanabe J."/>
            <person name="Wasaki J."/>
            <person name="Ito S."/>
        </authorList>
    </citation>
    <scope>NUCLEOTIDE SEQUENCE [GENOMIC DNA]</scope>
    <source>
        <strain>ATCC 27210 / DSM 20455 / JCM 14654 / NCDO 2250 / 7</strain>
    </source>
</reference>
<reference key="2">
    <citation type="journal article" date="2011" name="J. Bacteriol.">
        <title>Complete genome of the cellulolytic ruminal bacterium Ruminococcus albus 7.</title>
        <authorList>
            <person name="Suen G."/>
            <person name="Stevenson D.M."/>
            <person name="Bruce D.C."/>
            <person name="Chertkov O."/>
            <person name="Copeland A."/>
            <person name="Cheng J.F."/>
            <person name="Detter C."/>
            <person name="Detter J.C."/>
            <person name="Goodwin L.A."/>
            <person name="Han C.S."/>
            <person name="Hauser L.J."/>
            <person name="Ivanova N.N."/>
            <person name="Kyrpides N.C."/>
            <person name="Land M.L."/>
            <person name="Lapidus A."/>
            <person name="Lucas S."/>
            <person name="Ovchinnikova G."/>
            <person name="Pitluck S."/>
            <person name="Tapia R."/>
            <person name="Woyke T."/>
            <person name="Boyum J."/>
            <person name="Mead D."/>
            <person name="Weimer P.J."/>
        </authorList>
    </citation>
    <scope>NUCLEOTIDE SEQUENCE [LARGE SCALE GENOMIC DNA]</scope>
    <source>
        <strain>ATCC 27210 / DSM 20455 / JCM 14654 / NCDO 2250 / 7</strain>
    </source>
</reference>
<protein>
    <recommendedName>
        <fullName evidence="1">Cellobiose 2-epimerase</fullName>
        <shortName evidence="1">CE</shortName>
        <ecNumber evidence="1">5.1.3.11</ecNumber>
    </recommendedName>
</protein>
<accession>E6UB41</accession>
<accession>A8CF79</accession>
<organism>
    <name type="scientific">Ruminococcus albus (strain ATCC 27210 / DSM 20455 / JCM 14654 / NCDO 2250 / 7)</name>
    <dbReference type="NCBI Taxonomy" id="697329"/>
    <lineage>
        <taxon>Bacteria</taxon>
        <taxon>Bacillati</taxon>
        <taxon>Bacillota</taxon>
        <taxon>Clostridia</taxon>
        <taxon>Eubacteriales</taxon>
        <taxon>Oscillospiraceae</taxon>
        <taxon>Ruminococcus</taxon>
    </lineage>
</organism>